<dbReference type="EC" id="2.8.1.9" evidence="2"/>
<dbReference type="EMBL" id="DS027685">
    <property type="protein sequence ID" value="EAW25227.1"/>
    <property type="molecule type" value="Genomic_DNA"/>
</dbReference>
<dbReference type="RefSeq" id="XP_001267124.1">
    <property type="nucleotide sequence ID" value="XM_001267123.1"/>
</dbReference>
<dbReference type="SMR" id="A1CX75"/>
<dbReference type="STRING" id="331117.A1CX75"/>
<dbReference type="EnsemblFungi" id="EAW25227">
    <property type="protein sequence ID" value="EAW25227"/>
    <property type="gene ID" value="NFIA_107180"/>
</dbReference>
<dbReference type="GeneID" id="4593751"/>
<dbReference type="KEGG" id="nfi:NFIA_107180"/>
<dbReference type="VEuPathDB" id="FungiDB:NFIA_107180"/>
<dbReference type="eggNOG" id="KOG2142">
    <property type="taxonomic scope" value="Eukaryota"/>
</dbReference>
<dbReference type="HOGENOM" id="CLU_010913_0_0_1"/>
<dbReference type="OMA" id="PCTRCQM"/>
<dbReference type="OrthoDB" id="10264306at2759"/>
<dbReference type="UniPathway" id="UPA00344"/>
<dbReference type="Proteomes" id="UP000006702">
    <property type="component" value="Unassembled WGS sequence"/>
</dbReference>
<dbReference type="GO" id="GO:0016829">
    <property type="term" value="F:lyase activity"/>
    <property type="evidence" value="ECO:0007669"/>
    <property type="project" value="UniProtKB-UniRule"/>
</dbReference>
<dbReference type="GO" id="GO:0008265">
    <property type="term" value="F:molybdenum cofactor sulfurtransferase activity"/>
    <property type="evidence" value="ECO:0007669"/>
    <property type="project" value="UniProtKB-UniRule"/>
</dbReference>
<dbReference type="GO" id="GO:0030151">
    <property type="term" value="F:molybdenum ion binding"/>
    <property type="evidence" value="ECO:0007669"/>
    <property type="project" value="UniProtKB-UniRule"/>
</dbReference>
<dbReference type="GO" id="GO:0030170">
    <property type="term" value="F:pyridoxal phosphate binding"/>
    <property type="evidence" value="ECO:0007669"/>
    <property type="project" value="UniProtKB-UniRule"/>
</dbReference>
<dbReference type="GO" id="GO:0006777">
    <property type="term" value="P:Mo-molybdopterin cofactor biosynthetic process"/>
    <property type="evidence" value="ECO:0007669"/>
    <property type="project" value="UniProtKB-UniRule"/>
</dbReference>
<dbReference type="Gene3D" id="3.90.1150.10">
    <property type="entry name" value="Aspartate Aminotransferase, domain 1"/>
    <property type="match status" value="1"/>
</dbReference>
<dbReference type="Gene3D" id="3.40.640.10">
    <property type="entry name" value="Type I PLP-dependent aspartate aminotransferase-like (Major domain)"/>
    <property type="match status" value="1"/>
</dbReference>
<dbReference type="HAMAP" id="MF_03050">
    <property type="entry name" value="MOCOS"/>
    <property type="match status" value="1"/>
</dbReference>
<dbReference type="InterPro" id="IPR000192">
    <property type="entry name" value="Aminotrans_V_dom"/>
</dbReference>
<dbReference type="InterPro" id="IPR005302">
    <property type="entry name" value="MoCF_Sase_C"/>
</dbReference>
<dbReference type="InterPro" id="IPR028886">
    <property type="entry name" value="MoCo_sulfurase"/>
</dbReference>
<dbReference type="InterPro" id="IPR005303">
    <property type="entry name" value="MOCOS_middle"/>
</dbReference>
<dbReference type="InterPro" id="IPR015424">
    <property type="entry name" value="PyrdxlP-dep_Trfase"/>
</dbReference>
<dbReference type="InterPro" id="IPR015421">
    <property type="entry name" value="PyrdxlP-dep_Trfase_major"/>
</dbReference>
<dbReference type="InterPro" id="IPR015422">
    <property type="entry name" value="PyrdxlP-dep_Trfase_small"/>
</dbReference>
<dbReference type="PANTHER" id="PTHR14237:SF19">
    <property type="entry name" value="MITOCHONDRIAL AMIDOXIME REDUCING COMPONENT 1"/>
    <property type="match status" value="1"/>
</dbReference>
<dbReference type="PANTHER" id="PTHR14237">
    <property type="entry name" value="MOLYBDOPTERIN COFACTOR SULFURASE MOSC"/>
    <property type="match status" value="1"/>
</dbReference>
<dbReference type="Pfam" id="PF00266">
    <property type="entry name" value="Aminotran_5"/>
    <property type="match status" value="1"/>
</dbReference>
<dbReference type="Pfam" id="PF03473">
    <property type="entry name" value="MOSC"/>
    <property type="match status" value="1"/>
</dbReference>
<dbReference type="Pfam" id="PF03476">
    <property type="entry name" value="MOSC_N"/>
    <property type="match status" value="1"/>
</dbReference>
<dbReference type="SUPFAM" id="SSF141673">
    <property type="entry name" value="MOSC N-terminal domain-like"/>
    <property type="match status" value="1"/>
</dbReference>
<dbReference type="SUPFAM" id="SSF53383">
    <property type="entry name" value="PLP-dependent transferases"/>
    <property type="match status" value="1"/>
</dbReference>
<dbReference type="PROSITE" id="PS51340">
    <property type="entry name" value="MOSC"/>
    <property type="match status" value="1"/>
</dbReference>
<proteinExistence type="inferred from homology"/>
<protein>
    <recommendedName>
        <fullName evidence="2">Molybdenum cofactor sulfurase</fullName>
        <shortName evidence="2">MCS</shortName>
        <shortName evidence="2">MOS</shortName>
        <shortName evidence="2">MoCo sulfurase</shortName>
        <ecNumber evidence="2">2.8.1.9</ecNumber>
    </recommendedName>
    <alternativeName>
        <fullName evidence="2">Molybdenum cofactor sulfurtransferase</fullName>
    </alternativeName>
</protein>
<organism>
    <name type="scientific">Neosartorya fischeri (strain ATCC 1020 / DSM 3700 / CBS 544.65 / FGSC A1164 / JCM 1740 / NRRL 181 / WB 181)</name>
    <name type="common">Aspergillus fischerianus</name>
    <dbReference type="NCBI Taxonomy" id="331117"/>
    <lineage>
        <taxon>Eukaryota</taxon>
        <taxon>Fungi</taxon>
        <taxon>Dikarya</taxon>
        <taxon>Ascomycota</taxon>
        <taxon>Pezizomycotina</taxon>
        <taxon>Eurotiomycetes</taxon>
        <taxon>Eurotiomycetidae</taxon>
        <taxon>Eurotiales</taxon>
        <taxon>Aspergillaceae</taxon>
        <taxon>Aspergillus</taxon>
        <taxon>Aspergillus subgen. Fumigati</taxon>
    </lineage>
</organism>
<accession>A1CX75</accession>
<reference key="1">
    <citation type="journal article" date="2008" name="PLoS Genet.">
        <title>Genomic islands in the pathogenic filamentous fungus Aspergillus fumigatus.</title>
        <authorList>
            <person name="Fedorova N.D."/>
            <person name="Khaldi N."/>
            <person name="Joardar V.S."/>
            <person name="Maiti R."/>
            <person name="Amedeo P."/>
            <person name="Anderson M.J."/>
            <person name="Crabtree J."/>
            <person name="Silva J.C."/>
            <person name="Badger J.H."/>
            <person name="Albarraq A."/>
            <person name="Angiuoli S."/>
            <person name="Bussey H."/>
            <person name="Bowyer P."/>
            <person name="Cotty P.J."/>
            <person name="Dyer P.S."/>
            <person name="Egan A."/>
            <person name="Galens K."/>
            <person name="Fraser-Liggett C.M."/>
            <person name="Haas B.J."/>
            <person name="Inman J.M."/>
            <person name="Kent R."/>
            <person name="Lemieux S."/>
            <person name="Malavazi I."/>
            <person name="Orvis J."/>
            <person name="Roemer T."/>
            <person name="Ronning C.M."/>
            <person name="Sundaram J.P."/>
            <person name="Sutton G."/>
            <person name="Turner G."/>
            <person name="Venter J.C."/>
            <person name="White O.R."/>
            <person name="Whitty B.R."/>
            <person name="Youngman P."/>
            <person name="Wolfe K.H."/>
            <person name="Goldman G.H."/>
            <person name="Wortman J.R."/>
            <person name="Jiang B."/>
            <person name="Denning D.W."/>
            <person name="Nierman W.C."/>
        </authorList>
    </citation>
    <scope>NUCLEOTIDE SEQUENCE [LARGE SCALE GENOMIC DNA]</scope>
    <source>
        <strain>ATCC 1020 / DSM 3700 / CBS 544.65 / FGSC A1164 / JCM 1740 / NRRL 181 / WB 181</strain>
    </source>
</reference>
<keyword id="KW-0501">Molybdenum cofactor biosynthesis</keyword>
<keyword id="KW-0663">Pyridoxal phosphate</keyword>
<keyword id="KW-1185">Reference proteome</keyword>
<keyword id="KW-0808">Transferase</keyword>
<sequence length="851" mass="95040">MEGDTRRMWTQSESESIRSSKVRPLPLRKVTLYLTFVLIGVADTTYLDHAGTTLYAKSLIESFSRELTSNLFGNPHSLSASSQLSTRRVDDVRLRALRFFKADPDEFDLVFVANATAAIKLVADGMRDSTRQGFWYGYHVDAHTSLVGVRELAEKGGRCFTSDDEVEDWISKLCDVRSESLKLFAYPAQSNMNGRRLPLSWCKKIRNQGETAGGNVYTLLDAASLVSTSTLDLSDAAAAPDFTVLSFYKIFGFPDLGALIVRKSAGQIFEHRRYFGGGTVDMVLTRGLQWHAKKQSSIHDRLEDGTLPFHDIIALDSAFATHERLFGSMQNISSHTRFLAKRLYDRLNALRHFNGQRVCELYKSPRSDYNQPSTQGPIIAFNLRNSQGSWIGKSEVERLAAMRNIQIRSGSLCNPGGTSGSLGWTGADLLQQFSAGLRCGDDHDVMDGRPTGVLRLSLGAMTNLEDINTFVEFVEEFYVEKVATMDSLVTPVHSVPLQQPRFYIESLSLYPIKSCGPFRVPDGRRWEVRREGLAWDREWCLIHQGTGAALNQKKYPRMALIRPSIDLDRNVLRVTCEEPGSTNQKLLEVSLLREDTELATTSLCQRTSKASTVCGDQVTVQAYTSPSVAQFFSDFLGVPCTLARFGPHSSTRYASPRKAPGAWKQYLRKFVMPGSFPQEPSPPPAEKNPILLSNESPILLISRSSVNHLNENIKANQKRNRTGTSKAVAADVFRANIVVAESLADSPKVEQPYIEDQWEALKIGPGELQFDVLGSCQRCSMVCIDQFTGVRRDEPFSTLAKTRKINNKIVFGRHCSLSASEVTKEQHDNAERWTLMVGDIVTPSYAHDYDL</sequence>
<comment type="function">
    <text evidence="2">Sulfurates the molybdenum cofactor. Sulfation of molybdenum is essential for xanthine dehydrogenase (XDH) and aldehyde oxidase (ADO) enzymes in which molybdenum cofactor is liganded by 1 oxygen and 1 sulfur atom in active form.</text>
</comment>
<comment type="catalytic activity">
    <reaction evidence="2">
        <text>Mo-molybdopterin + L-cysteine + AH2 = thio-Mo-molybdopterin + L-alanine + A + H2O</text>
        <dbReference type="Rhea" id="RHEA:42636"/>
        <dbReference type="ChEBI" id="CHEBI:13193"/>
        <dbReference type="ChEBI" id="CHEBI:15377"/>
        <dbReference type="ChEBI" id="CHEBI:17499"/>
        <dbReference type="ChEBI" id="CHEBI:35235"/>
        <dbReference type="ChEBI" id="CHEBI:57972"/>
        <dbReference type="ChEBI" id="CHEBI:71302"/>
        <dbReference type="ChEBI" id="CHEBI:82685"/>
        <dbReference type="EC" id="2.8.1.9"/>
    </reaction>
</comment>
<comment type="cofactor">
    <cofactor evidence="2">
        <name>pyridoxal 5'-phosphate</name>
        <dbReference type="ChEBI" id="CHEBI:597326"/>
    </cofactor>
</comment>
<comment type="pathway">
    <text evidence="1">Cofactor biosynthesis; molybdopterin biosynthesis.</text>
</comment>
<comment type="similarity">
    <text evidence="2">Belongs to the class-V pyridoxal-phosphate-dependent aminotransferase family. MOCOS subfamily.</text>
</comment>
<feature type="chain" id="PRO_0000369385" description="Molybdenum cofactor sulfurase">
    <location>
        <begin position="1"/>
        <end position="851"/>
    </location>
</feature>
<feature type="domain" description="MOSC" evidence="2">
    <location>
        <begin position="665"/>
        <end position="844"/>
    </location>
</feature>
<feature type="active site" evidence="2">
    <location>
        <position position="413"/>
    </location>
</feature>
<feature type="modified residue" description="N6-(pyridoxal phosphate)lysine" evidence="2">
    <location>
        <position position="249"/>
    </location>
</feature>
<evidence type="ECO:0000250" key="1">
    <source>
        <dbReference type="UniProtKB" id="Q96EN8"/>
    </source>
</evidence>
<evidence type="ECO:0000255" key="2">
    <source>
        <dbReference type="HAMAP-Rule" id="MF_03050"/>
    </source>
</evidence>
<gene>
    <name evidence="2" type="primary">hxB</name>
    <name type="ORF">NFIA_107180</name>
</gene>
<name>MOCOS_NEOFI</name>